<feature type="chain" id="PRO_0000439157" description="RYamide receptor">
    <location>
        <begin position="1"/>
        <end position="367"/>
    </location>
</feature>
<feature type="topological domain" description="Extracellular" evidence="5">
    <location>
        <begin position="1"/>
        <end position="35"/>
    </location>
</feature>
<feature type="transmembrane region" description="Helical; Name=1" evidence="1">
    <location>
        <begin position="36"/>
        <end position="56"/>
    </location>
</feature>
<feature type="topological domain" description="Cytoplasmic" evidence="5">
    <location>
        <begin position="57"/>
        <end position="66"/>
    </location>
</feature>
<feature type="transmembrane region" description="Helical; Name=2" evidence="1">
    <location>
        <begin position="67"/>
        <end position="87"/>
    </location>
</feature>
<feature type="topological domain" description="Extracellular" evidence="5">
    <location>
        <begin position="88"/>
        <end position="113"/>
    </location>
</feature>
<feature type="transmembrane region" description="Helical; Name=3" evidence="1">
    <location>
        <begin position="114"/>
        <end position="134"/>
    </location>
</feature>
<feature type="topological domain" description="Cytoplasmic" evidence="5">
    <location>
        <begin position="135"/>
        <end position="143"/>
    </location>
</feature>
<feature type="transmembrane region" description="Helical; Name=4" evidence="1">
    <location>
        <begin position="144"/>
        <end position="164"/>
    </location>
</feature>
<feature type="topological domain" description="Extracellular" evidence="5">
    <location>
        <begin position="165"/>
        <end position="212"/>
    </location>
</feature>
<feature type="transmembrane region" description="Helical; Name=5" evidence="1">
    <location>
        <begin position="213"/>
        <end position="233"/>
    </location>
</feature>
<feature type="topological domain" description="Cytoplasmic" evidence="5">
    <location>
        <begin position="234"/>
        <end position="258"/>
    </location>
</feature>
<feature type="transmembrane region" description="Helical; Name=6" evidence="1">
    <location>
        <begin position="259"/>
        <end position="279"/>
    </location>
</feature>
<feature type="topological domain" description="Extracellular" evidence="5">
    <location>
        <begin position="280"/>
        <end position="282"/>
    </location>
</feature>
<feature type="transmembrane region" description="Helical; Name=7" evidence="1">
    <location>
        <begin position="283"/>
        <end position="303"/>
    </location>
</feature>
<feature type="topological domain" description="Cytoplasmic" evidence="5">
    <location>
        <begin position="304"/>
        <end position="367"/>
    </location>
</feature>
<feature type="glycosylation site" description="N-linked (GlcNAc...) asparagine" evidence="2">
    <location>
        <position position="4"/>
    </location>
</feature>
<feature type="glycosylation site" description="N-linked (GlcNAc...) asparagine" evidence="2">
    <location>
        <position position="8"/>
    </location>
</feature>
<feature type="glycosylation site" description="N-linked (GlcNAc...) asparagine" evidence="2">
    <location>
        <position position="21"/>
    </location>
</feature>
<feature type="glycosylation site" description="N-linked (GlcNAc...) asparagine" evidence="2">
    <location>
        <position position="107"/>
    </location>
</feature>
<dbReference type="EMBL" id="HQ709383">
    <property type="protein sequence ID" value="ADZ17181.1"/>
    <property type="molecule type" value="mRNA"/>
</dbReference>
<dbReference type="RefSeq" id="NP_001280539.1">
    <property type="nucleotide sequence ID" value="NM_001293610.1"/>
</dbReference>
<dbReference type="SMR" id="G4WMX4"/>
<dbReference type="GlyCosmos" id="G4WMX4">
    <property type="glycosylation" value="4 sites, No reported glycans"/>
</dbReference>
<dbReference type="GeneID" id="664001"/>
<dbReference type="KEGG" id="tca:664001"/>
<dbReference type="eggNOG" id="KOG3656">
    <property type="taxonomic scope" value="Eukaryota"/>
</dbReference>
<dbReference type="HOGENOM" id="CLU_009579_6_1_1"/>
<dbReference type="OrthoDB" id="10053194at2759"/>
<dbReference type="GO" id="GO:0005886">
    <property type="term" value="C:plasma membrane"/>
    <property type="evidence" value="ECO:0007669"/>
    <property type="project" value="UniProtKB-SubCell"/>
</dbReference>
<dbReference type="GO" id="GO:0004983">
    <property type="term" value="F:neuropeptide Y receptor activity"/>
    <property type="evidence" value="ECO:0007669"/>
    <property type="project" value="InterPro"/>
</dbReference>
<dbReference type="CDD" id="cd15392">
    <property type="entry name" value="7tmA_PR4-like"/>
    <property type="match status" value="1"/>
</dbReference>
<dbReference type="Gene3D" id="1.20.1070.10">
    <property type="entry name" value="Rhodopsin 7-helix transmembrane proteins"/>
    <property type="match status" value="1"/>
</dbReference>
<dbReference type="InterPro" id="IPR000276">
    <property type="entry name" value="GPCR_Rhodpsn"/>
</dbReference>
<dbReference type="InterPro" id="IPR017452">
    <property type="entry name" value="GPCR_Rhodpsn_7TM"/>
</dbReference>
<dbReference type="InterPro" id="IPR000611">
    <property type="entry name" value="NPY_rcpt"/>
</dbReference>
<dbReference type="PANTHER" id="PTHR24235:SF29">
    <property type="entry name" value="GH23382P"/>
    <property type="match status" value="1"/>
</dbReference>
<dbReference type="PANTHER" id="PTHR24235">
    <property type="entry name" value="NEUROPEPTIDE Y RECEPTOR"/>
    <property type="match status" value="1"/>
</dbReference>
<dbReference type="Pfam" id="PF00001">
    <property type="entry name" value="7tm_1"/>
    <property type="match status" value="1"/>
</dbReference>
<dbReference type="PRINTS" id="PR00237">
    <property type="entry name" value="GPCRRHODOPSN"/>
</dbReference>
<dbReference type="PRINTS" id="PR01012">
    <property type="entry name" value="NRPEPTIDEYR"/>
</dbReference>
<dbReference type="SUPFAM" id="SSF81321">
    <property type="entry name" value="Family A G protein-coupled receptor-like"/>
    <property type="match status" value="1"/>
</dbReference>
<dbReference type="PROSITE" id="PS50262">
    <property type="entry name" value="G_PROTEIN_RECEP_F1_2"/>
    <property type="match status" value="1"/>
</dbReference>
<gene>
    <name evidence="4" type="primary">RYa-R</name>
</gene>
<evidence type="ECO:0000255" key="1"/>
<evidence type="ECO:0000255" key="2">
    <source>
        <dbReference type="PROSITE-ProRule" id="PRU00498"/>
    </source>
</evidence>
<evidence type="ECO:0000269" key="3">
    <source>
    </source>
</evidence>
<evidence type="ECO:0000303" key="4">
    <source>
    </source>
</evidence>
<evidence type="ECO:0000305" key="5"/>
<evidence type="ECO:0000312" key="6">
    <source>
        <dbReference type="EMBL" id="ADZ17181.1"/>
    </source>
</evidence>
<comment type="function">
    <text evidence="3">Receptor for the neuropeptides RYamide-1 and RYamide-2. The activity of this receptor is mediated by G proteins which activate a phosphatidyl-inositol-calcium second messenger system. RYamide-2 is the most potent activator.</text>
</comment>
<comment type="subcellular location">
    <subcellularLocation>
        <location evidence="3">Cell membrane</location>
        <topology evidence="1">Multi-pass membrane protein</topology>
    </subcellularLocation>
</comment>
<comment type="similarity">
    <text evidence="5">Belongs to the G-protein coupled receptor 1 family.</text>
</comment>
<name>RYAR_TRICA</name>
<proteinExistence type="evidence at transcript level"/>
<reference evidence="6" key="1">
    <citation type="journal article" date="2011" name="Biochem. Biophys. Res. Commun.">
        <title>Identification of the Drosophila and Tribolium receptors for the recently discovered insect RYamide neuropeptides.</title>
        <authorList>
            <person name="Collin C."/>
            <person name="Hauser F."/>
            <person name="Krogh-Meyer P."/>
            <person name="Hansen K.K."/>
            <person name="Gonzalez de Valdivia E."/>
            <person name="Williamson M."/>
            <person name="Grimmelikhuijzen C.J."/>
        </authorList>
    </citation>
    <scope>NUCLEOTIDE SEQUENCE [MRNA]</scope>
    <scope>FUNCTION</scope>
    <scope>SUBCELLULAR LOCATION</scope>
</reference>
<protein>
    <recommendedName>
        <fullName evidence="4">RYamide receptor</fullName>
    </recommendedName>
</protein>
<accession>G4WMX4</accession>
<sequence length="367" mass="41851">MDANTTRNESFSLDCELVNPNSTLANVYFLSAVYSMYAIIFVVALIGNSFVCYIVLSSPPMRTVTNFFILNLAIGDVLITLLCVPFTSVSLLMQYWPFGGILCPVVNYSQALSVFVSAYTLVAISIDKYMIIMWPLKPRISKRFATYIIALVWLIAGITVLPSATFTTLINDENILGTSAYEQCDKYICAEEYSKVGQEYGDLYTKVLMFLQYVIPSLVLLFTYTSIGVVIWCHRIPGEAENSRDQRIAKNKTKMIKMMVTVVCVYTICWLPYNVLMIFKEHISGSVMVYLYFPLHGLAMSHACYNPIIYCYMNARFRNGFLQVMMSIPCLRRCNSINDISKILTCRWKVRRVHLYREITRAQPTSA</sequence>
<organism evidence="6">
    <name type="scientific">Tribolium castaneum</name>
    <name type="common">Red flour beetle</name>
    <dbReference type="NCBI Taxonomy" id="7070"/>
    <lineage>
        <taxon>Eukaryota</taxon>
        <taxon>Metazoa</taxon>
        <taxon>Ecdysozoa</taxon>
        <taxon>Arthropoda</taxon>
        <taxon>Hexapoda</taxon>
        <taxon>Insecta</taxon>
        <taxon>Pterygota</taxon>
        <taxon>Neoptera</taxon>
        <taxon>Endopterygota</taxon>
        <taxon>Coleoptera</taxon>
        <taxon>Polyphaga</taxon>
        <taxon>Cucujiformia</taxon>
        <taxon>Tenebrionidae</taxon>
        <taxon>Tenebrionidae incertae sedis</taxon>
        <taxon>Tribolium</taxon>
    </lineage>
</organism>
<keyword id="KW-1003">Cell membrane</keyword>
<keyword id="KW-0297">G-protein coupled receptor</keyword>
<keyword id="KW-0325">Glycoprotein</keyword>
<keyword id="KW-0472">Membrane</keyword>
<keyword id="KW-0675">Receptor</keyword>
<keyword id="KW-0807">Transducer</keyword>
<keyword id="KW-0812">Transmembrane</keyword>
<keyword id="KW-1133">Transmembrane helix</keyword>